<gene>
    <name type="primary">yxnA</name>
    <name type="ordered locus">BSU40000</name>
</gene>
<sequence length="356" mass="39358">MTIDHSVTNTEQLEQQNPAIKTKLKLKKLKDQVIVITGASSGIGLVTARMAAEKGAKVVAAARNEEALKELTDELKEKGHDAIWVKADVGKEEDVNRIAETAISTFGRFDTWVNNAAVSTFGHAMDVTVEDMKRMFDTNFWGPVYGTRAAVKHYTGRGVPGALINVGSLFGDRGTVIQSTYASAKFALHGWTESIRMELEKEQAPVSVTLIHPGRIDTPYNEHAHSYLDKQPAHYRSMIYPPEAVAEAILFAAEHPKRDMYIGSQAKAIAMLGALFPRLTDRLMEKIMYHSQHAERPSNPREESALYDAGCGMHDRGTNKGWMRSRSYYTKATKRPIVSAAVVAGLVAWAAAKRCR</sequence>
<keyword id="KW-0560">Oxidoreductase</keyword>
<keyword id="KW-1185">Reference proteome</keyword>
<dbReference type="EC" id="1.-.-.-"/>
<dbReference type="EMBL" id="AL009126">
    <property type="protein sequence ID" value="CAB16037.2"/>
    <property type="molecule type" value="Genomic_DNA"/>
</dbReference>
<dbReference type="PIR" id="E70082">
    <property type="entry name" value="E70082"/>
</dbReference>
<dbReference type="RefSeq" id="NP_391880.2">
    <property type="nucleotide sequence ID" value="NC_000964.3"/>
</dbReference>
<dbReference type="RefSeq" id="WP_003244500.1">
    <property type="nucleotide sequence ID" value="NZ_OZ025638.1"/>
</dbReference>
<dbReference type="SMR" id="O32291"/>
<dbReference type="FunCoup" id="O32291">
    <property type="interactions" value="46"/>
</dbReference>
<dbReference type="STRING" id="224308.BSU40000"/>
<dbReference type="PaxDb" id="224308-BSU40000"/>
<dbReference type="DNASU" id="937698"/>
<dbReference type="EnsemblBacteria" id="CAB16037">
    <property type="protein sequence ID" value="CAB16037"/>
    <property type="gene ID" value="BSU_40000"/>
</dbReference>
<dbReference type="GeneID" id="937698"/>
<dbReference type="KEGG" id="bsu:BSU40000"/>
<dbReference type="PATRIC" id="fig|224308.179.peg.4326"/>
<dbReference type="eggNOG" id="COG1028">
    <property type="taxonomic scope" value="Bacteria"/>
</dbReference>
<dbReference type="InParanoid" id="O32291"/>
<dbReference type="OrthoDB" id="9775296at2"/>
<dbReference type="PhylomeDB" id="O32291"/>
<dbReference type="BioCyc" id="BSUB:BSU40000-MONOMER"/>
<dbReference type="Proteomes" id="UP000001570">
    <property type="component" value="Chromosome"/>
</dbReference>
<dbReference type="GO" id="GO:0016491">
    <property type="term" value="F:oxidoreductase activity"/>
    <property type="evidence" value="ECO:0007669"/>
    <property type="project" value="UniProtKB-KW"/>
</dbReference>
<dbReference type="CDD" id="cd05360">
    <property type="entry name" value="SDR_c3"/>
    <property type="match status" value="1"/>
</dbReference>
<dbReference type="Gene3D" id="3.40.50.720">
    <property type="entry name" value="NAD(P)-binding Rossmann-like Domain"/>
    <property type="match status" value="1"/>
</dbReference>
<dbReference type="InterPro" id="IPR036291">
    <property type="entry name" value="NAD(P)-bd_dom_sf"/>
</dbReference>
<dbReference type="InterPro" id="IPR020904">
    <property type="entry name" value="Sc_DH/Rdtase_CS"/>
</dbReference>
<dbReference type="InterPro" id="IPR002347">
    <property type="entry name" value="SDR_fam"/>
</dbReference>
<dbReference type="NCBIfam" id="NF005495">
    <property type="entry name" value="PRK07109.1"/>
    <property type="match status" value="1"/>
</dbReference>
<dbReference type="PANTHER" id="PTHR44196">
    <property type="entry name" value="DEHYDROGENASE/REDUCTASE SDR FAMILY MEMBER 7B"/>
    <property type="match status" value="1"/>
</dbReference>
<dbReference type="PANTHER" id="PTHR44196:SF1">
    <property type="entry name" value="DEHYDROGENASE_REDUCTASE SDR FAMILY MEMBER 7B"/>
    <property type="match status" value="1"/>
</dbReference>
<dbReference type="Pfam" id="PF00106">
    <property type="entry name" value="adh_short"/>
    <property type="match status" value="1"/>
</dbReference>
<dbReference type="PRINTS" id="PR00081">
    <property type="entry name" value="GDHRDH"/>
</dbReference>
<dbReference type="PRINTS" id="PR00080">
    <property type="entry name" value="SDRFAMILY"/>
</dbReference>
<dbReference type="SUPFAM" id="SSF51735">
    <property type="entry name" value="NAD(P)-binding Rossmann-fold domains"/>
    <property type="match status" value="1"/>
</dbReference>
<dbReference type="PROSITE" id="PS00061">
    <property type="entry name" value="ADH_SHORT"/>
    <property type="match status" value="1"/>
</dbReference>
<comment type="similarity">
    <text evidence="3">Belongs to the short-chain dehydrogenases/reductases (SDR) family.</text>
</comment>
<feature type="chain" id="PRO_0000377005" description="Uncharacterized oxidoreductase YxnA">
    <location>
        <begin position="1"/>
        <end position="356"/>
    </location>
</feature>
<feature type="active site" description="Proton acceptor" evidence="2">
    <location>
        <position position="181"/>
    </location>
</feature>
<feature type="binding site" evidence="1">
    <location>
        <begin position="37"/>
        <end position="44"/>
    </location>
    <ligand>
        <name>NADP(+)</name>
        <dbReference type="ChEBI" id="CHEBI:58349"/>
    </ligand>
</feature>
<feature type="binding site" evidence="1">
    <location>
        <position position="168"/>
    </location>
    <ligand>
        <name>substrate</name>
    </ligand>
</feature>
<name>YXNA_BACSU</name>
<proteinExistence type="inferred from homology"/>
<evidence type="ECO:0000250" key="1"/>
<evidence type="ECO:0000255" key="2">
    <source>
        <dbReference type="PROSITE-ProRule" id="PRU10001"/>
    </source>
</evidence>
<evidence type="ECO:0000305" key="3"/>
<reference key="1">
    <citation type="journal article" date="1997" name="Nature">
        <title>The complete genome sequence of the Gram-positive bacterium Bacillus subtilis.</title>
        <authorList>
            <person name="Kunst F."/>
            <person name="Ogasawara N."/>
            <person name="Moszer I."/>
            <person name="Albertini A.M."/>
            <person name="Alloni G."/>
            <person name="Azevedo V."/>
            <person name="Bertero M.G."/>
            <person name="Bessieres P."/>
            <person name="Bolotin A."/>
            <person name="Borchert S."/>
            <person name="Borriss R."/>
            <person name="Boursier L."/>
            <person name="Brans A."/>
            <person name="Braun M."/>
            <person name="Brignell S.C."/>
            <person name="Bron S."/>
            <person name="Brouillet S."/>
            <person name="Bruschi C.V."/>
            <person name="Caldwell B."/>
            <person name="Capuano V."/>
            <person name="Carter N.M."/>
            <person name="Choi S.-K."/>
            <person name="Codani J.-J."/>
            <person name="Connerton I.F."/>
            <person name="Cummings N.J."/>
            <person name="Daniel R.A."/>
            <person name="Denizot F."/>
            <person name="Devine K.M."/>
            <person name="Duesterhoeft A."/>
            <person name="Ehrlich S.D."/>
            <person name="Emmerson P.T."/>
            <person name="Entian K.-D."/>
            <person name="Errington J."/>
            <person name="Fabret C."/>
            <person name="Ferrari E."/>
            <person name="Foulger D."/>
            <person name="Fritz C."/>
            <person name="Fujita M."/>
            <person name="Fujita Y."/>
            <person name="Fuma S."/>
            <person name="Galizzi A."/>
            <person name="Galleron N."/>
            <person name="Ghim S.-Y."/>
            <person name="Glaser P."/>
            <person name="Goffeau A."/>
            <person name="Golightly E.J."/>
            <person name="Grandi G."/>
            <person name="Guiseppi G."/>
            <person name="Guy B.J."/>
            <person name="Haga K."/>
            <person name="Haiech J."/>
            <person name="Harwood C.R."/>
            <person name="Henaut A."/>
            <person name="Hilbert H."/>
            <person name="Holsappel S."/>
            <person name="Hosono S."/>
            <person name="Hullo M.-F."/>
            <person name="Itaya M."/>
            <person name="Jones L.-M."/>
            <person name="Joris B."/>
            <person name="Karamata D."/>
            <person name="Kasahara Y."/>
            <person name="Klaerr-Blanchard M."/>
            <person name="Klein C."/>
            <person name="Kobayashi Y."/>
            <person name="Koetter P."/>
            <person name="Koningstein G."/>
            <person name="Krogh S."/>
            <person name="Kumano M."/>
            <person name="Kurita K."/>
            <person name="Lapidus A."/>
            <person name="Lardinois S."/>
            <person name="Lauber J."/>
            <person name="Lazarevic V."/>
            <person name="Lee S.-M."/>
            <person name="Levine A."/>
            <person name="Liu H."/>
            <person name="Masuda S."/>
            <person name="Mauel C."/>
            <person name="Medigue C."/>
            <person name="Medina N."/>
            <person name="Mellado R.P."/>
            <person name="Mizuno M."/>
            <person name="Moestl D."/>
            <person name="Nakai S."/>
            <person name="Noback M."/>
            <person name="Noone D."/>
            <person name="O'Reilly M."/>
            <person name="Ogawa K."/>
            <person name="Ogiwara A."/>
            <person name="Oudega B."/>
            <person name="Park S.-H."/>
            <person name="Parro V."/>
            <person name="Pohl T.M."/>
            <person name="Portetelle D."/>
            <person name="Porwollik S."/>
            <person name="Prescott A.M."/>
            <person name="Presecan E."/>
            <person name="Pujic P."/>
            <person name="Purnelle B."/>
            <person name="Rapoport G."/>
            <person name="Rey M."/>
            <person name="Reynolds S."/>
            <person name="Rieger M."/>
            <person name="Rivolta C."/>
            <person name="Rocha E."/>
            <person name="Roche B."/>
            <person name="Rose M."/>
            <person name="Sadaie Y."/>
            <person name="Sato T."/>
            <person name="Scanlan E."/>
            <person name="Schleich S."/>
            <person name="Schroeter R."/>
            <person name="Scoffone F."/>
            <person name="Sekiguchi J."/>
            <person name="Sekowska A."/>
            <person name="Seror S.J."/>
            <person name="Serror P."/>
            <person name="Shin B.-S."/>
            <person name="Soldo B."/>
            <person name="Sorokin A."/>
            <person name="Tacconi E."/>
            <person name="Takagi T."/>
            <person name="Takahashi H."/>
            <person name="Takemaru K."/>
            <person name="Takeuchi M."/>
            <person name="Tamakoshi A."/>
            <person name="Tanaka T."/>
            <person name="Terpstra P."/>
            <person name="Tognoni A."/>
            <person name="Tosato V."/>
            <person name="Uchiyama S."/>
            <person name="Vandenbol M."/>
            <person name="Vannier F."/>
            <person name="Vassarotti A."/>
            <person name="Viari A."/>
            <person name="Wambutt R."/>
            <person name="Wedler E."/>
            <person name="Wedler H."/>
            <person name="Weitzenegger T."/>
            <person name="Winters P."/>
            <person name="Wipat A."/>
            <person name="Yamamoto H."/>
            <person name="Yamane K."/>
            <person name="Yasumoto K."/>
            <person name="Yata K."/>
            <person name="Yoshida K."/>
            <person name="Yoshikawa H.-F."/>
            <person name="Zumstein E."/>
            <person name="Yoshikawa H."/>
            <person name="Danchin A."/>
        </authorList>
    </citation>
    <scope>NUCLEOTIDE SEQUENCE [LARGE SCALE GENOMIC DNA]</scope>
    <source>
        <strain>168</strain>
    </source>
</reference>
<accession>O32291</accession>
<protein>
    <recommendedName>
        <fullName>Uncharacterized oxidoreductase YxnA</fullName>
        <ecNumber>1.-.-.-</ecNumber>
    </recommendedName>
</protein>
<organism>
    <name type="scientific">Bacillus subtilis (strain 168)</name>
    <dbReference type="NCBI Taxonomy" id="224308"/>
    <lineage>
        <taxon>Bacteria</taxon>
        <taxon>Bacillati</taxon>
        <taxon>Bacillota</taxon>
        <taxon>Bacilli</taxon>
        <taxon>Bacillales</taxon>
        <taxon>Bacillaceae</taxon>
        <taxon>Bacillus</taxon>
    </lineage>
</organism>